<sequence length="128" mass="13435">MESYQNQSGAQQTHQQLDQFGNPFPATTGAYGTAGGAPAVAEGGGLSGMLHRSGSSSSSSSEDDGLGGRRRKKKGITEKIKEKLPGHHDSNKTSSLGSTTTAYDTGTVHHEKKGMMEKIKEKLPGGHH</sequence>
<reference key="1">
    <citation type="journal article" date="1992" name="Plant Mol. Biol.">
        <title>Structure and sequence of a dehydrin-like gene in Arabidopsis thaliana.</title>
        <authorList>
            <person name="Rouse D.T."/>
            <person name="Gehring C.A."/>
            <person name="Parish R.W."/>
        </authorList>
    </citation>
    <scope>NUCLEOTIDE SEQUENCE [GENOMIC DNA]</scope>
    <source>
        <strain>cv. Landsberg erecta</strain>
    </source>
</reference>
<reference key="2">
    <citation type="submission" date="1995-01" db="EMBL/GenBank/DDBJ databases">
        <authorList>
            <person name="Rouse D.T."/>
            <person name="Heazlewood J.L."/>
        </authorList>
    </citation>
    <scope>NUCLEOTIDE SEQUENCE [GENOMIC DNA]</scope>
    <source>
        <strain>cv. Landsberg erecta</strain>
    </source>
</reference>
<reference key="3">
    <citation type="journal article" date="2000" name="Nature">
        <title>Sequence and analysis of chromosome 3 of the plant Arabidopsis thaliana.</title>
        <authorList>
            <person name="Salanoubat M."/>
            <person name="Lemcke K."/>
            <person name="Rieger M."/>
            <person name="Ansorge W."/>
            <person name="Unseld M."/>
            <person name="Fartmann B."/>
            <person name="Valle G."/>
            <person name="Bloecker H."/>
            <person name="Perez-Alonso M."/>
            <person name="Obermaier B."/>
            <person name="Delseny M."/>
            <person name="Boutry M."/>
            <person name="Grivell L.A."/>
            <person name="Mache R."/>
            <person name="Puigdomenech P."/>
            <person name="De Simone V."/>
            <person name="Choisne N."/>
            <person name="Artiguenave F."/>
            <person name="Robert C."/>
            <person name="Brottier P."/>
            <person name="Wincker P."/>
            <person name="Cattolico L."/>
            <person name="Weissenbach J."/>
            <person name="Saurin W."/>
            <person name="Quetier F."/>
            <person name="Schaefer M."/>
            <person name="Mueller-Auer S."/>
            <person name="Gabel C."/>
            <person name="Fuchs M."/>
            <person name="Benes V."/>
            <person name="Wurmbach E."/>
            <person name="Drzonek H."/>
            <person name="Erfle H."/>
            <person name="Jordan N."/>
            <person name="Bangert S."/>
            <person name="Wiedelmann R."/>
            <person name="Kranz H."/>
            <person name="Voss H."/>
            <person name="Holland R."/>
            <person name="Brandt P."/>
            <person name="Nyakatura G."/>
            <person name="Vezzi A."/>
            <person name="D'Angelo M."/>
            <person name="Pallavicini A."/>
            <person name="Toppo S."/>
            <person name="Simionati B."/>
            <person name="Conrad A."/>
            <person name="Hornischer K."/>
            <person name="Kauer G."/>
            <person name="Loehnert T.-H."/>
            <person name="Nordsiek G."/>
            <person name="Reichelt J."/>
            <person name="Scharfe M."/>
            <person name="Schoen O."/>
            <person name="Bargues M."/>
            <person name="Terol J."/>
            <person name="Climent J."/>
            <person name="Navarro P."/>
            <person name="Collado C."/>
            <person name="Perez-Perez A."/>
            <person name="Ottenwaelder B."/>
            <person name="Duchemin D."/>
            <person name="Cooke R."/>
            <person name="Laudie M."/>
            <person name="Berger-Llauro C."/>
            <person name="Purnelle B."/>
            <person name="Masuy D."/>
            <person name="de Haan M."/>
            <person name="Maarse A.C."/>
            <person name="Alcaraz J.-P."/>
            <person name="Cottet A."/>
            <person name="Casacuberta E."/>
            <person name="Monfort A."/>
            <person name="Argiriou A."/>
            <person name="Flores M."/>
            <person name="Liguori R."/>
            <person name="Vitale D."/>
            <person name="Mannhaupt G."/>
            <person name="Haase D."/>
            <person name="Schoof H."/>
            <person name="Rudd S."/>
            <person name="Zaccaria P."/>
            <person name="Mewes H.-W."/>
            <person name="Mayer K.F.X."/>
            <person name="Kaul S."/>
            <person name="Town C.D."/>
            <person name="Koo H.L."/>
            <person name="Tallon L.J."/>
            <person name="Jenkins J."/>
            <person name="Rooney T."/>
            <person name="Rizzo M."/>
            <person name="Walts A."/>
            <person name="Utterback T."/>
            <person name="Fujii C.Y."/>
            <person name="Shea T.P."/>
            <person name="Creasy T.H."/>
            <person name="Haas B."/>
            <person name="Maiti R."/>
            <person name="Wu D."/>
            <person name="Peterson J."/>
            <person name="Van Aken S."/>
            <person name="Pai G."/>
            <person name="Militscher J."/>
            <person name="Sellers P."/>
            <person name="Gill J.E."/>
            <person name="Feldblyum T.V."/>
            <person name="Preuss D."/>
            <person name="Lin X."/>
            <person name="Nierman W.C."/>
            <person name="Salzberg S.L."/>
            <person name="White O."/>
            <person name="Venter J.C."/>
            <person name="Fraser C.M."/>
            <person name="Kaneko T."/>
            <person name="Nakamura Y."/>
            <person name="Sato S."/>
            <person name="Kato T."/>
            <person name="Asamizu E."/>
            <person name="Sasamoto S."/>
            <person name="Kimura T."/>
            <person name="Idesawa K."/>
            <person name="Kawashima K."/>
            <person name="Kishida Y."/>
            <person name="Kiyokawa C."/>
            <person name="Kohara M."/>
            <person name="Matsumoto M."/>
            <person name="Matsuno A."/>
            <person name="Muraki A."/>
            <person name="Nakayama S."/>
            <person name="Nakazaki N."/>
            <person name="Shinpo S."/>
            <person name="Takeuchi C."/>
            <person name="Wada T."/>
            <person name="Watanabe A."/>
            <person name="Yamada M."/>
            <person name="Yasuda M."/>
            <person name="Tabata S."/>
        </authorList>
    </citation>
    <scope>NUCLEOTIDE SEQUENCE [LARGE SCALE GENOMIC DNA]</scope>
    <source>
        <strain>cv. Columbia</strain>
    </source>
</reference>
<reference key="4">
    <citation type="journal article" date="2017" name="Plant J.">
        <title>Araport11: a complete reannotation of the Arabidopsis thaliana reference genome.</title>
        <authorList>
            <person name="Cheng C.Y."/>
            <person name="Krishnakumar V."/>
            <person name="Chan A.P."/>
            <person name="Thibaud-Nissen F."/>
            <person name="Schobel S."/>
            <person name="Town C.D."/>
        </authorList>
    </citation>
    <scope>GENOME REANNOTATION</scope>
    <source>
        <strain>cv. Columbia</strain>
    </source>
</reference>
<reference key="5">
    <citation type="submission" date="2006-07" db="EMBL/GenBank/DDBJ databases">
        <title>Large-scale analysis of RIKEN Arabidopsis full-length (RAFL) cDNAs.</title>
        <authorList>
            <person name="Totoki Y."/>
            <person name="Seki M."/>
            <person name="Ishida J."/>
            <person name="Nakajima M."/>
            <person name="Enju A."/>
            <person name="Kamiya A."/>
            <person name="Narusaka M."/>
            <person name="Shin-i T."/>
            <person name="Nakagawa M."/>
            <person name="Sakamoto N."/>
            <person name="Oishi K."/>
            <person name="Kohara Y."/>
            <person name="Kobayashi M."/>
            <person name="Toyoda A."/>
            <person name="Sakaki Y."/>
            <person name="Sakurai T."/>
            <person name="Iida K."/>
            <person name="Akiyama K."/>
            <person name="Satou M."/>
            <person name="Toyoda T."/>
            <person name="Konagaya A."/>
            <person name="Carninci P."/>
            <person name="Kawai J."/>
            <person name="Hayashizaki Y."/>
            <person name="Shinozaki K."/>
        </authorList>
    </citation>
    <scope>NUCLEOTIDE SEQUENCE [LARGE SCALE MRNA]</scope>
    <source>
        <strain>cv. Columbia</strain>
    </source>
</reference>
<reference key="6">
    <citation type="journal article" date="1994" name="Plant Mol. Biol.">
        <title>Characterization and differential expression of dhn/lea/rab-like genes during cold acclimation and drought stress in Arabidopsis thaliana.</title>
        <authorList>
            <person name="Welin B.V."/>
            <person name="Olson A."/>
            <person name="Nylander M."/>
            <person name="Palva E.T."/>
        </authorList>
    </citation>
    <scope>INDUCTION</scope>
    <source>
        <strain>cv. Landsberg erecta</strain>
        <tissue>Leaf</tissue>
    </source>
</reference>
<name>XERO1_ARATH</name>
<feature type="chain" id="PRO_0000100038" description="Dehydrin Xero 1">
    <location>
        <begin position="1"/>
        <end position="128"/>
    </location>
</feature>
<feature type="region of interest" description="Disordered" evidence="1">
    <location>
        <begin position="1"/>
        <end position="128"/>
    </location>
</feature>
<feature type="compositionally biased region" description="Polar residues" evidence="1">
    <location>
        <begin position="1"/>
        <end position="19"/>
    </location>
</feature>
<feature type="compositionally biased region" description="Low complexity" evidence="1">
    <location>
        <begin position="23"/>
        <end position="41"/>
    </location>
</feature>
<feature type="compositionally biased region" description="Low complexity" evidence="1">
    <location>
        <begin position="48"/>
        <end position="60"/>
    </location>
</feature>
<feature type="compositionally biased region" description="Basic and acidic residues" evidence="1">
    <location>
        <begin position="75"/>
        <end position="91"/>
    </location>
</feature>
<feature type="compositionally biased region" description="Polar residues" evidence="1">
    <location>
        <begin position="92"/>
        <end position="104"/>
    </location>
</feature>
<feature type="compositionally biased region" description="Basic and acidic residues" evidence="1">
    <location>
        <begin position="107"/>
        <end position="128"/>
    </location>
</feature>
<feature type="sequence conflict" description="In Ref. 1; CAA45524." evidence="3" ref="1">
    <location>
        <position position="36"/>
    </location>
</feature>
<evidence type="ECO:0000256" key="1">
    <source>
        <dbReference type="SAM" id="MobiDB-lite"/>
    </source>
</evidence>
<evidence type="ECO:0000269" key="2">
    <source>
    </source>
</evidence>
<evidence type="ECO:0000305" key="3"/>
<protein>
    <recommendedName>
        <fullName>Dehydrin Xero 1</fullName>
    </recommendedName>
</protein>
<proteinExistence type="evidence at transcript level"/>
<gene>
    <name type="primary">XERO1</name>
    <name type="synonym">DHNX</name>
    <name type="ordered locus">At3g50980</name>
    <name type="ORF">F24M12.20</name>
</gene>
<comment type="induction">
    <text evidence="2">Not induced by low temperature, abscisic acid or drought stress.</text>
</comment>
<comment type="similarity">
    <text evidence="3">Belongs to the plant dehydrin family.</text>
</comment>
<comment type="sequence caution" evidence="3">
    <conflict type="erroneous gene model prediction">
        <sequence resource="EMBL-CDS" id="CAB62620"/>
    </conflict>
</comment>
<accession>P25863</accession>
<accession>Q0WP39</accession>
<accession>Q9SD47</accession>
<organism>
    <name type="scientific">Arabidopsis thaliana</name>
    <name type="common">Mouse-ear cress</name>
    <dbReference type="NCBI Taxonomy" id="3702"/>
    <lineage>
        <taxon>Eukaryota</taxon>
        <taxon>Viridiplantae</taxon>
        <taxon>Streptophyta</taxon>
        <taxon>Embryophyta</taxon>
        <taxon>Tracheophyta</taxon>
        <taxon>Spermatophyta</taxon>
        <taxon>Magnoliopsida</taxon>
        <taxon>eudicotyledons</taxon>
        <taxon>Gunneridae</taxon>
        <taxon>Pentapetalae</taxon>
        <taxon>rosids</taxon>
        <taxon>malvids</taxon>
        <taxon>Brassicales</taxon>
        <taxon>Brassicaceae</taxon>
        <taxon>Camelineae</taxon>
        <taxon>Arabidopsis</taxon>
    </lineage>
</organism>
<dbReference type="EMBL" id="X64199">
    <property type="protein sequence ID" value="CAA45524.1"/>
    <property type="molecule type" value="Genomic_DNA"/>
</dbReference>
<dbReference type="EMBL" id="U19537">
    <property type="protein sequence ID" value="AAB00375.1"/>
    <property type="molecule type" value="Genomic_DNA"/>
</dbReference>
<dbReference type="EMBL" id="AL132980">
    <property type="protein sequence ID" value="CAB62620.1"/>
    <property type="status" value="ALT_SEQ"/>
    <property type="molecule type" value="Genomic_DNA"/>
</dbReference>
<dbReference type="EMBL" id="CP002686">
    <property type="protein sequence ID" value="AEE78734.1"/>
    <property type="molecule type" value="Genomic_DNA"/>
</dbReference>
<dbReference type="EMBL" id="AK229245">
    <property type="protein sequence ID" value="BAF01110.1"/>
    <property type="molecule type" value="mRNA"/>
</dbReference>
<dbReference type="PIR" id="S22485">
    <property type="entry name" value="KNMUHY"/>
</dbReference>
<dbReference type="PIR" id="T45729">
    <property type="entry name" value="T45729"/>
</dbReference>
<dbReference type="RefSeq" id="NP_190667.2">
    <property type="nucleotide sequence ID" value="NM_114958.4"/>
</dbReference>
<dbReference type="FunCoup" id="P25863">
    <property type="interactions" value="54"/>
</dbReference>
<dbReference type="STRING" id="3702.P25863"/>
<dbReference type="PaxDb" id="3702-AT3G50980.1"/>
<dbReference type="ProteomicsDB" id="242376"/>
<dbReference type="EnsemblPlants" id="AT3G50980.1">
    <property type="protein sequence ID" value="AT3G50980.1"/>
    <property type="gene ID" value="AT3G50980"/>
</dbReference>
<dbReference type="GeneID" id="824262"/>
<dbReference type="Gramene" id="AT3G50980.1">
    <property type="protein sequence ID" value="AT3G50980.1"/>
    <property type="gene ID" value="AT3G50980"/>
</dbReference>
<dbReference type="KEGG" id="ath:AT3G50980"/>
<dbReference type="Araport" id="AT3G50980"/>
<dbReference type="TAIR" id="AT3G50980">
    <property type="gene designation" value="XERO1"/>
</dbReference>
<dbReference type="eggNOG" id="ENOG502S4VW">
    <property type="taxonomic scope" value="Eukaryota"/>
</dbReference>
<dbReference type="HOGENOM" id="CLU_060028_1_0_1"/>
<dbReference type="InParanoid" id="P25863"/>
<dbReference type="OMA" id="GAQQTHQ"/>
<dbReference type="PRO" id="PR:P25863"/>
<dbReference type="Proteomes" id="UP000006548">
    <property type="component" value="Chromosome 3"/>
</dbReference>
<dbReference type="ExpressionAtlas" id="P25863">
    <property type="expression patterns" value="baseline and differential"/>
</dbReference>
<dbReference type="GO" id="GO:0005829">
    <property type="term" value="C:cytosol"/>
    <property type="evidence" value="ECO:0007005"/>
    <property type="project" value="TAIR"/>
</dbReference>
<dbReference type="GO" id="GO:0046872">
    <property type="term" value="F:metal ion binding"/>
    <property type="evidence" value="ECO:0007669"/>
    <property type="project" value="UniProtKB-ARBA"/>
</dbReference>
<dbReference type="GO" id="GO:0009737">
    <property type="term" value="P:response to abscisic acid"/>
    <property type="evidence" value="ECO:0007669"/>
    <property type="project" value="UniProtKB-ARBA"/>
</dbReference>
<dbReference type="GO" id="GO:0009409">
    <property type="term" value="P:response to cold"/>
    <property type="evidence" value="ECO:0007669"/>
    <property type="project" value="UniProtKB-ARBA"/>
</dbReference>
<dbReference type="GO" id="GO:0009414">
    <property type="term" value="P:response to water deprivation"/>
    <property type="evidence" value="ECO:0007669"/>
    <property type="project" value="UniProtKB-ARBA"/>
</dbReference>
<dbReference type="InterPro" id="IPR000167">
    <property type="entry name" value="Dehydrin"/>
</dbReference>
<dbReference type="InterPro" id="IPR030513">
    <property type="entry name" value="Dehydrin_CS"/>
</dbReference>
<dbReference type="PANTHER" id="PTHR33346:SF42">
    <property type="entry name" value="DEHYDRIN XERO 1"/>
    <property type="match status" value="1"/>
</dbReference>
<dbReference type="PANTHER" id="PTHR33346">
    <property type="entry name" value="DEHYDRIN XERO 2-RELATED"/>
    <property type="match status" value="1"/>
</dbReference>
<dbReference type="Pfam" id="PF00257">
    <property type="entry name" value="Dehydrin"/>
    <property type="match status" value="1"/>
</dbReference>
<dbReference type="PROSITE" id="PS00315">
    <property type="entry name" value="DEHYDRIN_1"/>
    <property type="match status" value="1"/>
</dbReference>
<dbReference type="PROSITE" id="PS00823">
    <property type="entry name" value="DEHYDRIN_2"/>
    <property type="match status" value="2"/>
</dbReference>
<keyword id="KW-1185">Reference proteome</keyword>